<geneLocation type="mitochondrion"/>
<gene>
    <name type="primary">MT-CYB</name>
    <name type="synonym">COB</name>
    <name type="synonym">CYTB</name>
    <name type="synonym">MTCYB</name>
</gene>
<sequence length="379" mass="42580">MTNLRKTHPLMKIINNSFIDLPAPSNISSWWNFGSLLGICLIVQILTGLFLAMHYTSDTTTAFSSVTHICRDVNYGWLIRYLHANGASMFFICLFLHVGRGIYYGSYMFLETWNIGVLLLFAVMATAFMGYVLPWGQMSFWGATVITNLLSAIPYIGTDLVEWIWGGFSVDKATLTRFFAFHFILPFIVAALAGVHLLFLHETGSNNPSGLPSDADKIPFHPYYTIKDILGVLLFILILTSLVLFSPDLLGDPDNYTPANPLNTPPHIKPEWYFLFAYAILRSIPNKLGGVLALVLSILVLAVIPLLHTSKQRSMMFRPFSQCLFWILVADLLTLTWIGGQPVEHPFIIIGQLASILYFLLILVLMPIASLLENNLLKW</sequence>
<protein>
    <recommendedName>
        <fullName>Cytochrome b</fullName>
    </recommendedName>
    <alternativeName>
        <fullName>Complex III subunit 3</fullName>
    </alternativeName>
    <alternativeName>
        <fullName>Complex III subunit III</fullName>
    </alternativeName>
    <alternativeName>
        <fullName>Cytochrome b-c1 complex subunit 3</fullName>
    </alternativeName>
    <alternativeName>
        <fullName>Ubiquinol-cytochrome-c reductase complex cytochrome b subunit</fullName>
    </alternativeName>
</protein>
<reference key="1">
    <citation type="submission" date="2004-03" db="EMBL/GenBank/DDBJ databases">
        <title>Molecular phylogenetics of the Soricidae (Insectivora, Mammalia) based on mitochondrial cytochrome b gene sequences.</title>
        <authorList>
            <person name="Ohdachi S.D."/>
            <person name="Iwasa M.A."/>
            <person name="Abe H."/>
            <person name="Vogel P."/>
            <person name="Oshida T."/>
            <person name="Lin L.K."/>
            <person name="Hasegawa M."/>
        </authorList>
    </citation>
    <scope>NUCLEOTIDE SEQUENCE [GENOMIC DNA]</scope>
    <source>
        <strain>Isolate SO-03/2/17-1</strain>
        <strain>Isolate SO-03/2/17-2</strain>
        <tissue>Liver</tissue>
    </source>
</reference>
<proteinExistence type="inferred from homology"/>
<accession>Q1XIL4</accession>
<accession>Q1XIL3</accession>
<comment type="function">
    <text evidence="2">Component of the ubiquinol-cytochrome c reductase complex (complex III or cytochrome b-c1 complex) that is part of the mitochondrial respiratory chain. The b-c1 complex mediates electron transfer from ubiquinol to cytochrome c. Contributes to the generation of a proton gradient across the mitochondrial membrane that is then used for ATP synthesis.</text>
</comment>
<comment type="cofactor">
    <cofactor evidence="2">
        <name>heme b</name>
        <dbReference type="ChEBI" id="CHEBI:60344"/>
    </cofactor>
    <text evidence="2">Binds 2 heme b groups non-covalently.</text>
</comment>
<comment type="subunit">
    <text evidence="2">The cytochrome bc1 complex contains 11 subunits: 3 respiratory subunits (MT-CYB, CYC1 and UQCRFS1), 2 core proteins (UQCRC1 and UQCRC2) and 6 low-molecular weight proteins (UQCRH/QCR6, UQCRB/QCR7, UQCRQ/QCR8, UQCR10/QCR9, UQCR11/QCR10 and a cleavage product of UQCRFS1). This cytochrome bc1 complex then forms a dimer.</text>
</comment>
<comment type="subcellular location">
    <subcellularLocation>
        <location evidence="2">Mitochondrion inner membrane</location>
        <topology evidence="2">Multi-pass membrane protein</topology>
    </subcellularLocation>
</comment>
<comment type="miscellaneous">
    <text evidence="1">Heme 1 (or BL or b562) is low-potential and absorbs at about 562 nm, and heme 2 (or BH or b566) is high-potential and absorbs at about 566 nm.</text>
</comment>
<comment type="similarity">
    <text evidence="3 4">Belongs to the cytochrome b family.</text>
</comment>
<comment type="caution">
    <text evidence="2">The full-length protein contains only eight transmembrane helices, not nine as predicted by bioinformatics tools.</text>
</comment>
<organism>
    <name type="scientific">Sorex saussurei</name>
    <name type="common">Saussure's shrew</name>
    <dbReference type="NCBI Taxonomy" id="268769"/>
    <lineage>
        <taxon>Eukaryota</taxon>
        <taxon>Metazoa</taxon>
        <taxon>Chordata</taxon>
        <taxon>Craniata</taxon>
        <taxon>Vertebrata</taxon>
        <taxon>Euteleostomi</taxon>
        <taxon>Mammalia</taxon>
        <taxon>Eutheria</taxon>
        <taxon>Laurasiatheria</taxon>
        <taxon>Eulipotyphla</taxon>
        <taxon>Soricidae</taxon>
        <taxon>Soricinae</taxon>
        <taxon>Sorex</taxon>
    </lineage>
</organism>
<name>CYB_SORSU</name>
<dbReference type="EMBL" id="AB175117">
    <property type="protein sequence ID" value="BAE92682.1"/>
    <property type="molecule type" value="Genomic_DNA"/>
</dbReference>
<dbReference type="EMBL" id="AB175118">
    <property type="protein sequence ID" value="BAE92683.1"/>
    <property type="molecule type" value="Genomic_DNA"/>
</dbReference>
<dbReference type="SMR" id="Q1XIL4"/>
<dbReference type="GO" id="GO:0005743">
    <property type="term" value="C:mitochondrial inner membrane"/>
    <property type="evidence" value="ECO:0007669"/>
    <property type="project" value="UniProtKB-SubCell"/>
</dbReference>
<dbReference type="GO" id="GO:0045275">
    <property type="term" value="C:respiratory chain complex III"/>
    <property type="evidence" value="ECO:0007669"/>
    <property type="project" value="InterPro"/>
</dbReference>
<dbReference type="GO" id="GO:0046872">
    <property type="term" value="F:metal ion binding"/>
    <property type="evidence" value="ECO:0007669"/>
    <property type="project" value="UniProtKB-KW"/>
</dbReference>
<dbReference type="GO" id="GO:0008121">
    <property type="term" value="F:ubiquinol-cytochrome-c reductase activity"/>
    <property type="evidence" value="ECO:0007669"/>
    <property type="project" value="InterPro"/>
</dbReference>
<dbReference type="GO" id="GO:0006122">
    <property type="term" value="P:mitochondrial electron transport, ubiquinol to cytochrome c"/>
    <property type="evidence" value="ECO:0007669"/>
    <property type="project" value="TreeGrafter"/>
</dbReference>
<dbReference type="CDD" id="cd00290">
    <property type="entry name" value="cytochrome_b_C"/>
    <property type="match status" value="1"/>
</dbReference>
<dbReference type="CDD" id="cd00284">
    <property type="entry name" value="Cytochrome_b_N"/>
    <property type="match status" value="1"/>
</dbReference>
<dbReference type="FunFam" id="1.20.810.10:FF:000002">
    <property type="entry name" value="Cytochrome b"/>
    <property type="match status" value="1"/>
</dbReference>
<dbReference type="Gene3D" id="1.20.810.10">
    <property type="entry name" value="Cytochrome Bc1 Complex, Chain C"/>
    <property type="match status" value="1"/>
</dbReference>
<dbReference type="InterPro" id="IPR005798">
    <property type="entry name" value="Cyt_b/b6_C"/>
</dbReference>
<dbReference type="InterPro" id="IPR036150">
    <property type="entry name" value="Cyt_b/b6_C_sf"/>
</dbReference>
<dbReference type="InterPro" id="IPR005797">
    <property type="entry name" value="Cyt_b/b6_N"/>
</dbReference>
<dbReference type="InterPro" id="IPR027387">
    <property type="entry name" value="Cytb/b6-like_sf"/>
</dbReference>
<dbReference type="InterPro" id="IPR030689">
    <property type="entry name" value="Cytochrome_b"/>
</dbReference>
<dbReference type="InterPro" id="IPR048260">
    <property type="entry name" value="Cytochrome_b_C_euk/bac"/>
</dbReference>
<dbReference type="InterPro" id="IPR048259">
    <property type="entry name" value="Cytochrome_b_N_euk/bac"/>
</dbReference>
<dbReference type="InterPro" id="IPR016174">
    <property type="entry name" value="Di-haem_cyt_TM"/>
</dbReference>
<dbReference type="PANTHER" id="PTHR19271">
    <property type="entry name" value="CYTOCHROME B"/>
    <property type="match status" value="1"/>
</dbReference>
<dbReference type="PANTHER" id="PTHR19271:SF16">
    <property type="entry name" value="CYTOCHROME B"/>
    <property type="match status" value="1"/>
</dbReference>
<dbReference type="Pfam" id="PF00032">
    <property type="entry name" value="Cytochrom_B_C"/>
    <property type="match status" value="1"/>
</dbReference>
<dbReference type="Pfam" id="PF00033">
    <property type="entry name" value="Cytochrome_B"/>
    <property type="match status" value="1"/>
</dbReference>
<dbReference type="PIRSF" id="PIRSF038885">
    <property type="entry name" value="COB"/>
    <property type="match status" value="1"/>
</dbReference>
<dbReference type="SUPFAM" id="SSF81648">
    <property type="entry name" value="a domain/subunit of cytochrome bc1 complex (Ubiquinol-cytochrome c reductase)"/>
    <property type="match status" value="1"/>
</dbReference>
<dbReference type="SUPFAM" id="SSF81342">
    <property type="entry name" value="Transmembrane di-heme cytochromes"/>
    <property type="match status" value="1"/>
</dbReference>
<dbReference type="PROSITE" id="PS51003">
    <property type="entry name" value="CYTB_CTER"/>
    <property type="match status" value="1"/>
</dbReference>
<dbReference type="PROSITE" id="PS51002">
    <property type="entry name" value="CYTB_NTER"/>
    <property type="match status" value="1"/>
</dbReference>
<evidence type="ECO:0000250" key="1"/>
<evidence type="ECO:0000250" key="2">
    <source>
        <dbReference type="UniProtKB" id="P00157"/>
    </source>
</evidence>
<evidence type="ECO:0000255" key="3">
    <source>
        <dbReference type="PROSITE-ProRule" id="PRU00967"/>
    </source>
</evidence>
<evidence type="ECO:0000255" key="4">
    <source>
        <dbReference type="PROSITE-ProRule" id="PRU00968"/>
    </source>
</evidence>
<keyword id="KW-0249">Electron transport</keyword>
<keyword id="KW-0349">Heme</keyword>
<keyword id="KW-0408">Iron</keyword>
<keyword id="KW-0472">Membrane</keyword>
<keyword id="KW-0479">Metal-binding</keyword>
<keyword id="KW-0496">Mitochondrion</keyword>
<keyword id="KW-0999">Mitochondrion inner membrane</keyword>
<keyword id="KW-0679">Respiratory chain</keyword>
<keyword id="KW-0812">Transmembrane</keyword>
<keyword id="KW-1133">Transmembrane helix</keyword>
<keyword id="KW-0813">Transport</keyword>
<keyword id="KW-0830">Ubiquinone</keyword>
<feature type="chain" id="PRO_0000254759" description="Cytochrome b">
    <location>
        <begin position="1"/>
        <end position="379"/>
    </location>
</feature>
<feature type="transmembrane region" description="Helical" evidence="2">
    <location>
        <begin position="33"/>
        <end position="53"/>
    </location>
</feature>
<feature type="transmembrane region" description="Helical" evidence="2">
    <location>
        <begin position="77"/>
        <end position="98"/>
    </location>
</feature>
<feature type="transmembrane region" description="Helical" evidence="2">
    <location>
        <begin position="113"/>
        <end position="133"/>
    </location>
</feature>
<feature type="transmembrane region" description="Helical" evidence="2">
    <location>
        <begin position="178"/>
        <end position="198"/>
    </location>
</feature>
<feature type="transmembrane region" description="Helical" evidence="2">
    <location>
        <begin position="226"/>
        <end position="246"/>
    </location>
</feature>
<feature type="transmembrane region" description="Helical" evidence="2">
    <location>
        <begin position="288"/>
        <end position="308"/>
    </location>
</feature>
<feature type="transmembrane region" description="Helical" evidence="2">
    <location>
        <begin position="320"/>
        <end position="340"/>
    </location>
</feature>
<feature type="transmembrane region" description="Helical" evidence="2">
    <location>
        <begin position="347"/>
        <end position="367"/>
    </location>
</feature>
<feature type="binding site" description="axial binding residue" evidence="2">
    <location>
        <position position="83"/>
    </location>
    <ligand>
        <name>heme b</name>
        <dbReference type="ChEBI" id="CHEBI:60344"/>
        <label>b562</label>
    </ligand>
    <ligandPart>
        <name>Fe</name>
        <dbReference type="ChEBI" id="CHEBI:18248"/>
    </ligandPart>
</feature>
<feature type="binding site" description="axial binding residue" evidence="2">
    <location>
        <position position="97"/>
    </location>
    <ligand>
        <name>heme b</name>
        <dbReference type="ChEBI" id="CHEBI:60344"/>
        <label>b566</label>
    </ligand>
    <ligandPart>
        <name>Fe</name>
        <dbReference type="ChEBI" id="CHEBI:18248"/>
    </ligandPart>
</feature>
<feature type="binding site" description="axial binding residue" evidence="2">
    <location>
        <position position="182"/>
    </location>
    <ligand>
        <name>heme b</name>
        <dbReference type="ChEBI" id="CHEBI:60344"/>
        <label>b562</label>
    </ligand>
    <ligandPart>
        <name>Fe</name>
        <dbReference type="ChEBI" id="CHEBI:18248"/>
    </ligandPart>
</feature>
<feature type="binding site" description="axial binding residue" evidence="2">
    <location>
        <position position="196"/>
    </location>
    <ligand>
        <name>heme b</name>
        <dbReference type="ChEBI" id="CHEBI:60344"/>
        <label>b566</label>
    </ligand>
    <ligandPart>
        <name>Fe</name>
        <dbReference type="ChEBI" id="CHEBI:18248"/>
    </ligandPart>
</feature>
<feature type="binding site" evidence="2">
    <location>
        <position position="201"/>
    </location>
    <ligand>
        <name>a ubiquinone</name>
        <dbReference type="ChEBI" id="CHEBI:16389"/>
    </ligand>
</feature>
<feature type="sequence variant" description="In strain: Isolate SO-03/2/17-2.">
    <original>K</original>
    <variation>T</variation>
    <location>
        <position position="6"/>
    </location>
</feature>
<feature type="sequence variant" description="In strain: Isolate SO-03/2/17-2.">
    <original>I</original>
    <variation>T</variation>
    <location>
        <position position="39"/>
    </location>
</feature>
<feature type="sequence variant" description="In strain: Isolate SO-03/2/17-2.">
    <original>S</original>
    <variation>L</variation>
    <location>
        <position position="213"/>
    </location>
</feature>